<gene>
    <name evidence="5" type="ordered locus">YFL015W-A</name>
</gene>
<dbReference type="EMBL" id="KJ412246">
    <property type="protein sequence ID" value="AHX39289.1"/>
    <property type="molecule type" value="Genomic_DNA"/>
</dbReference>
<dbReference type="SMR" id="A0A023PXD9"/>
<dbReference type="STRING" id="4932.YFL015W-A"/>
<dbReference type="PaxDb" id="4932-YFL015W-A"/>
<dbReference type="EnsemblFungi" id="YFL015W-A_mRNA">
    <property type="protein sequence ID" value="YFL015W-A"/>
    <property type="gene ID" value="YFL015W-A"/>
</dbReference>
<dbReference type="AGR" id="SGD:S000028765"/>
<dbReference type="SGD" id="S000028765">
    <property type="gene designation" value="YFL015W-A"/>
</dbReference>
<dbReference type="HOGENOM" id="CLU_2238157_0_0_1"/>
<dbReference type="GO" id="GO:0016020">
    <property type="term" value="C:membrane"/>
    <property type="evidence" value="ECO:0007669"/>
    <property type="project" value="UniProtKB-SubCell"/>
</dbReference>
<comment type="subcellular location">
    <subcellularLocation>
        <location evidence="1">Membrane</location>
        <topology evidence="1">Single-pass membrane protein</topology>
    </subcellularLocation>
</comment>
<comment type="miscellaneous">
    <text evidence="3">Partially overlaps YFL015C.</text>
</comment>
<comment type="caution">
    <text evidence="4">Product of a dubious gene prediction unlikely to encode a functional protein. Because of that it is not part of the S.cerevisiae S288c complete/reference proteome set.</text>
</comment>
<proteinExistence type="uncertain"/>
<accession>A0A023PXD9</accession>
<name>YF015_YEAST</name>
<protein>
    <recommendedName>
        <fullName evidence="3">Putative uncharacterized membrane protein YFL015W-A</fullName>
    </recommendedName>
</protein>
<organism>
    <name type="scientific">Saccharomyces cerevisiae (strain ATCC 204508 / S288c)</name>
    <name type="common">Baker's yeast</name>
    <dbReference type="NCBI Taxonomy" id="559292"/>
    <lineage>
        <taxon>Eukaryota</taxon>
        <taxon>Fungi</taxon>
        <taxon>Dikarya</taxon>
        <taxon>Ascomycota</taxon>
        <taxon>Saccharomycotina</taxon>
        <taxon>Saccharomycetes</taxon>
        <taxon>Saccharomycetales</taxon>
        <taxon>Saccharomycetaceae</taxon>
        <taxon>Saccharomyces</taxon>
    </lineage>
</organism>
<evidence type="ECO:0000255" key="1"/>
<evidence type="ECO:0000256" key="2">
    <source>
        <dbReference type="SAM" id="MobiDB-lite"/>
    </source>
</evidence>
<evidence type="ECO:0000305" key="3"/>
<evidence type="ECO:0000305" key="4">
    <source>
    </source>
</evidence>
<evidence type="ECO:0000312" key="5">
    <source>
        <dbReference type="SGD" id="S000028765"/>
    </source>
</evidence>
<reference key="1">
    <citation type="journal article" date="1995" name="Nat. Genet.">
        <title>Analysis of the nucleotide sequence of chromosome VI from Saccharomyces cerevisiae.</title>
        <authorList>
            <person name="Murakami Y."/>
            <person name="Naitou M."/>
            <person name="Hagiwara H."/>
            <person name="Shibata T."/>
            <person name="Ozawa M."/>
            <person name="Sasanuma S."/>
            <person name="Sasanuma M."/>
            <person name="Tsuchiya Y."/>
            <person name="Soeda E."/>
            <person name="Yokoyama K."/>
            <person name="Yamazaki M."/>
            <person name="Tashiro H."/>
            <person name="Eki T."/>
        </authorList>
    </citation>
    <scope>NUCLEOTIDE SEQUENCE [LARGE SCALE GENOMIC DNA]</scope>
    <source>
        <strain>ATCC 204508 / S288c</strain>
    </source>
</reference>
<reference key="2">
    <citation type="journal article" date="2014" name="G3 (Bethesda)">
        <title>The reference genome sequence of Saccharomyces cerevisiae: Then and now.</title>
        <authorList>
            <person name="Engel S.R."/>
            <person name="Dietrich F.S."/>
            <person name="Fisk D.G."/>
            <person name="Binkley G."/>
            <person name="Balakrishnan R."/>
            <person name="Costanzo M.C."/>
            <person name="Dwight S.S."/>
            <person name="Hitz B.C."/>
            <person name="Karra K."/>
            <person name="Nash R.S."/>
            <person name="Weng S."/>
            <person name="Wong E.D."/>
            <person name="Lloyd P."/>
            <person name="Skrzypek M.S."/>
            <person name="Miyasato S.R."/>
            <person name="Simison M."/>
            <person name="Cherry J.M."/>
        </authorList>
    </citation>
    <scope>GENOME REANNOTATION</scope>
    <source>
        <strain>ATCC 204508 / S288c</strain>
    </source>
</reference>
<feature type="chain" id="PRO_0000431010" description="Putative uncharacterized membrane protein YFL015W-A">
    <location>
        <begin position="1"/>
        <end position="105"/>
    </location>
</feature>
<feature type="transmembrane region" description="Helical" evidence="1">
    <location>
        <begin position="25"/>
        <end position="47"/>
    </location>
</feature>
<feature type="region of interest" description="Disordered" evidence="2">
    <location>
        <begin position="54"/>
        <end position="89"/>
    </location>
</feature>
<keyword id="KW-0472">Membrane</keyword>
<keyword id="KW-0812">Transmembrane</keyword>
<keyword id="KW-1133">Transmembrane helix</keyword>
<sequence>MIKKSRTYYPSFGAYFHLLPAHPNAHSVTLLFGIFRSSPFLLLFLLIHRKVGEGRGSQRMKKKRGRANPSENLRERADPTNGPAENGKKGSVMCGCQLAVAMTTC</sequence>